<comment type="function">
    <text evidence="1 2">Probably binds to the cytoplasmic part of the holin during lysis inhibition and stabilizes the holin-antiholin complex thereby resulting in a robust block of the hole formation.</text>
</comment>
<comment type="subunit">
    <text evidence="1 2">Homooligomer. Interacts with holin (via N-terminus).</text>
</comment>
<comment type="similarity">
    <text evidence="1">Belongs to the T4likevirus lysis inhibition accessory protein rIII family.</text>
</comment>
<accession>P17309</accession>
<feature type="chain" id="PRO_0000165072" description="Lysis inhibition accessory protein">
    <location>
        <begin position="1"/>
        <end position="82"/>
    </location>
</feature>
<feature type="site" description="Interaction with holin" evidence="1 2">
    <location>
        <position position="42"/>
    </location>
</feature>
<feature type="mutagenesis site" description="In r67; r-type (rapid lysis) plaque morphology." evidence="3">
    <original>H</original>
    <variation>R</variation>
    <location>
        <position position="42"/>
    </location>
</feature>
<feature type="mutagenesis site" description="In rES40 and rBB9; r-type (rapid lysis) plaque morphology. Loss of interaction with holin. No effect on homooligomerization." evidence="3">
    <original>K</original>
    <variation>E</variation>
    <location>
        <position position="82"/>
    </location>
</feature>
<feature type="sequence conflict" description="In Ref. 1; CAA35652." evidence="5" ref="1">
    <original>KPLASAARKAVRHFVVTLK</original>
    <variation>NLWLLLHEKQFVTLW</variation>
    <location>
        <begin position="64"/>
        <end position="82"/>
    </location>
</feature>
<gene>
    <name type="primary">rIII</name>
    <name type="synonym">31.-1</name>
</gene>
<sequence>MIKQLQHALELQRNAWNNGHENYGASIDVEAEALEILRYFKHLNPAQTALAAELQEKDELKYAKPLASAARKAVRHFVVTLK</sequence>
<name>LINR3_BPT4</name>
<dbReference type="EMBL" id="X17657">
    <property type="protein sequence ID" value="CAA35652.1"/>
    <property type="molecule type" value="Genomic_DNA"/>
</dbReference>
<dbReference type="EMBL" id="M37882">
    <property type="protein sequence ID" value="AAA32507.1"/>
    <property type="molecule type" value="Genomic_DNA"/>
</dbReference>
<dbReference type="EMBL" id="X54536">
    <property type="protein sequence ID" value="CAA38406.1"/>
    <property type="molecule type" value="Genomic_DNA"/>
</dbReference>
<dbReference type="EMBL" id="AF158101">
    <property type="protein sequence ID" value="AAD42650.1"/>
    <property type="molecule type" value="Genomic_DNA"/>
</dbReference>
<dbReference type="PIR" id="JT0765">
    <property type="entry name" value="JT0765"/>
</dbReference>
<dbReference type="RefSeq" id="NP_049824.1">
    <property type="nucleotide sequence ID" value="NC_000866.4"/>
</dbReference>
<dbReference type="GeneID" id="1258761"/>
<dbReference type="KEGG" id="vg:1258761"/>
<dbReference type="OrthoDB" id="21332at10239"/>
<dbReference type="Proteomes" id="UP000009087">
    <property type="component" value="Segment"/>
</dbReference>
<dbReference type="GO" id="GO:0140678">
    <property type="term" value="F:molecular function inhibitor activity"/>
    <property type="evidence" value="ECO:0007669"/>
    <property type="project" value="UniProtKB-UniRule"/>
</dbReference>
<dbReference type="GO" id="GO:0140313">
    <property type="term" value="F:molecular sequestering activity"/>
    <property type="evidence" value="ECO:0000314"/>
    <property type="project" value="UniProtKB"/>
</dbReference>
<dbReference type="HAMAP" id="MF_04112">
    <property type="entry name" value="Linr3_BPT4"/>
    <property type="match status" value="1"/>
</dbReference>
<dbReference type="InterPro" id="IPR034688">
    <property type="entry name" value="Linr3"/>
</dbReference>
<organismHost>
    <name type="scientific">Escherichia coli</name>
    <dbReference type="NCBI Taxonomy" id="562"/>
</organismHost>
<reference key="1">
    <citation type="journal article" date="1990" name="Nucleic Acids Res.">
        <title>Cloning and sequencing of bacteriophage T4 genes between map positions 128.3-130.3.</title>
        <authorList>
            <person name="Prilipov A.G."/>
            <person name="Mesyanzhinov V.V."/>
            <person name="Aebi U."/>
            <person name="Kellenberger E."/>
        </authorList>
    </citation>
    <scope>NUCLEOTIDE SEQUENCE [GENOMIC DNA]</scope>
    <source>
        <strain>D</strain>
    </source>
</reference>
<reference key="2">
    <citation type="journal article" date="1990" name="Nucleic Acids Res.">
        <title>Nucleotide sequence of bacteriophage T4 gene 31 region.</title>
        <authorList>
            <person name="Raudonikiene A."/>
            <person name="Nivinskas R."/>
        </authorList>
    </citation>
    <scope>NUCLEOTIDE SEQUENCE [GENOMIC DNA]</scope>
</reference>
<reference key="3">
    <citation type="journal article" date="1992" name="Gene">
        <title>Gene rIII is the nearest downstream neighbour of bacteriophage T4 gene 31.</title>
        <authorList>
            <person name="Raudonikiene A."/>
            <person name="Nivinskas R."/>
        </authorList>
    </citation>
    <scope>NUCLEOTIDE SEQUENCE [GENOMIC DNA]</scope>
    <scope>CHARACTERIZATION</scope>
</reference>
<reference key="4">
    <citation type="journal article" date="1993" name="Gene">
        <title>The sequences of gene rIII of bacteriophage T4 and its mutants.</title>
        <authorList>
            <person name="Raudonikiene A."/>
            <person name="Nivinskas R."/>
        </authorList>
    </citation>
    <scope>NUCLEOTIDE SEQUENCE [GENOMIC DNA]</scope>
    <scope>MUTAGENESIS OF HIS-42 AND LYS-82</scope>
</reference>
<reference key="5">
    <citation type="journal article" date="2003" name="Microbiol. Mol. Biol. Rev.">
        <title>Bacteriophage T4 genome.</title>
        <authorList>
            <person name="Miller E.S."/>
            <person name="Kutter E."/>
            <person name="Mosig G."/>
            <person name="Arisaka F."/>
            <person name="Kunisawa T."/>
            <person name="Ruger W."/>
        </authorList>
    </citation>
    <scope>NUCLEOTIDE SEQUENCE [LARGE SCALE GENOMIC DNA]</scope>
</reference>
<reference key="6">
    <citation type="journal article" date="2016" name="J. Bacteriol.">
        <title>The last r locus unveiled: T4 RIII is a cytoplasmic antiholin.</title>
        <authorList>
            <person name="Chen Y."/>
            <person name="Young R."/>
        </authorList>
    </citation>
    <scope>INTERACTION WITH LYSIS HOLIN</scope>
    <scope>MUTAGENESIS OF HIS-42</scope>
    <scope>SUBUNIT</scope>
    <scope>FUNCTION</scope>
</reference>
<organism>
    <name type="scientific">Enterobacteria phage T4</name>
    <name type="common">Bacteriophage T4</name>
    <dbReference type="NCBI Taxonomy" id="10665"/>
    <lineage>
        <taxon>Viruses</taxon>
        <taxon>Duplodnaviria</taxon>
        <taxon>Heunggongvirae</taxon>
        <taxon>Uroviricota</taxon>
        <taxon>Caudoviricetes</taxon>
        <taxon>Straboviridae</taxon>
        <taxon>Tevenvirinae</taxon>
        <taxon>Tequatrovirus</taxon>
    </lineage>
</organism>
<keyword id="KW-1185">Reference proteome</keyword>
<proteinExistence type="evidence at protein level"/>
<protein>
    <recommendedName>
        <fullName evidence="1">Lysis inhibition accessory protein</fullName>
    </recommendedName>
    <alternativeName>
        <fullName evidence="4">Protein rIII</fullName>
    </alternativeName>
</protein>
<evidence type="ECO:0000255" key="1">
    <source>
        <dbReference type="HAMAP-Rule" id="MF_04112"/>
    </source>
</evidence>
<evidence type="ECO:0000269" key="2">
    <source>
    </source>
</evidence>
<evidence type="ECO:0000269" key="3">
    <source>
    </source>
</evidence>
<evidence type="ECO:0000303" key="4">
    <source>
    </source>
</evidence>
<evidence type="ECO:0000305" key="5"/>